<feature type="chain" id="PRO_0000303847" description="Xaa-Pro dipeptidase 1">
    <location>
        <begin position="1"/>
        <end position="452"/>
    </location>
</feature>
<feature type="binding site" evidence="1">
    <location>
        <position position="247"/>
    </location>
    <ligand>
        <name>Mn(2+)</name>
        <dbReference type="ChEBI" id="CHEBI:29035"/>
        <label>2</label>
    </ligand>
</feature>
<feature type="binding site" evidence="1">
    <location>
        <position position="258"/>
    </location>
    <ligand>
        <name>Mn(2+)</name>
        <dbReference type="ChEBI" id="CHEBI:29035"/>
        <label>1</label>
    </ligand>
</feature>
<feature type="binding site" evidence="1">
    <location>
        <position position="258"/>
    </location>
    <ligand>
        <name>Mn(2+)</name>
        <dbReference type="ChEBI" id="CHEBI:29035"/>
        <label>2</label>
    </ligand>
</feature>
<feature type="binding site" evidence="1">
    <location>
        <position position="338"/>
    </location>
    <ligand>
        <name>Mn(2+)</name>
        <dbReference type="ChEBI" id="CHEBI:29035"/>
        <label>1</label>
    </ligand>
</feature>
<feature type="binding site" evidence="1">
    <location>
        <position position="383"/>
    </location>
    <ligand>
        <name>Mn(2+)</name>
        <dbReference type="ChEBI" id="CHEBI:29035"/>
        <label>1</label>
    </ligand>
</feature>
<feature type="binding site" evidence="1">
    <location>
        <position position="422"/>
    </location>
    <ligand>
        <name>Mn(2+)</name>
        <dbReference type="ChEBI" id="CHEBI:29035"/>
        <label>1</label>
    </ligand>
</feature>
<feature type="binding site" evidence="1">
    <location>
        <position position="422"/>
    </location>
    <ligand>
        <name>Mn(2+)</name>
        <dbReference type="ChEBI" id="CHEBI:29035"/>
        <label>2</label>
    </ligand>
</feature>
<proteinExistence type="inferred from homology"/>
<evidence type="ECO:0000255" key="1">
    <source>
        <dbReference type="HAMAP-Rule" id="MF_01279"/>
    </source>
</evidence>
<protein>
    <recommendedName>
        <fullName evidence="1">Xaa-Pro dipeptidase 1</fullName>
        <shortName evidence="1">X-Pro dipeptidase 1</shortName>
        <ecNumber evidence="1">3.4.13.9</ecNumber>
    </recommendedName>
    <alternativeName>
        <fullName evidence="1">Imidodipeptidase 1</fullName>
    </alternativeName>
    <alternativeName>
        <fullName evidence="1">Proline dipeptidase 1</fullName>
        <shortName evidence="1">Prolidase 1</shortName>
    </alternativeName>
</protein>
<gene>
    <name evidence="1" type="primary">pepQ1</name>
    <name type="synonym">pepQ</name>
    <name type="ordered locus">IL0013</name>
</gene>
<name>PEPQ1_IDILO</name>
<sequence>MTATADLWPLFPDHIKQLQTRAERLFKRENLDLVAIHSGQQKRWFLDDMNYPFRANPHFKAWCPETQLANAWVILKPNTRPTLVLLSSPDFWHTTASLEGAPWLEEFHVEHISSPEAIEKLLPYDKKSAAYLGEHIEVAKALGFENINPDPVLHFFHYHRLFKTDYEIACLTQANHIAAEGHVAAADAFFNGASEFDCLLKYMAATRQGQNEVPYNHIIGQNENASVLHHWMPDKKASGSLKSMLVDAGAEVCGYAADISRTWSKQHNEYEELIAALDQITLALIDKMKPGVEFPALHQLAHEQIANVLFAFGFVSCSPEQMIEDGITTVFLPHGLGHPLGLQVHDVGAAQADERGTPIAPPSGHLTLKTTRTVEPRQVYTIEPGIYFIEPLLQKLANSRNKHLINWRRVDEFKPFGGVRIEDNIVVYRERNDNLTRQTALDAYVKKVTRLA</sequence>
<reference key="1">
    <citation type="journal article" date="2004" name="Proc. Natl. Acad. Sci. U.S.A.">
        <title>Genome sequence of the deep-sea gamma-proteobacterium Idiomarina loihiensis reveals amino acid fermentation as a source of carbon and energy.</title>
        <authorList>
            <person name="Hou S."/>
            <person name="Saw J.H."/>
            <person name="Lee K.S."/>
            <person name="Freitas T.A."/>
            <person name="Belisle C."/>
            <person name="Kawarabayasi Y."/>
            <person name="Donachie S.P."/>
            <person name="Pikina A."/>
            <person name="Galperin M.Y."/>
            <person name="Koonin E.V."/>
            <person name="Makarova K.S."/>
            <person name="Omelchenko M.V."/>
            <person name="Sorokin A."/>
            <person name="Wolf Y.I."/>
            <person name="Li Q.X."/>
            <person name="Keum Y.S."/>
            <person name="Campbell S."/>
            <person name="Denery J."/>
            <person name="Aizawa S."/>
            <person name="Shibata S."/>
            <person name="Malahoff A."/>
            <person name="Alam M."/>
        </authorList>
    </citation>
    <scope>NUCLEOTIDE SEQUENCE [LARGE SCALE GENOMIC DNA]</scope>
    <source>
        <strain>ATCC BAA-735 / DSM 15497 / L2-TR</strain>
    </source>
</reference>
<organism>
    <name type="scientific">Idiomarina loihiensis (strain ATCC BAA-735 / DSM 15497 / L2-TR)</name>
    <dbReference type="NCBI Taxonomy" id="283942"/>
    <lineage>
        <taxon>Bacteria</taxon>
        <taxon>Pseudomonadati</taxon>
        <taxon>Pseudomonadota</taxon>
        <taxon>Gammaproteobacteria</taxon>
        <taxon>Alteromonadales</taxon>
        <taxon>Idiomarinaceae</taxon>
        <taxon>Idiomarina</taxon>
    </lineage>
</organism>
<comment type="function">
    <text evidence="1">Splits dipeptides with a prolyl residue in the C-terminal position.</text>
</comment>
<comment type="catalytic activity">
    <reaction evidence="1">
        <text>Xaa-L-Pro dipeptide + H2O = an L-alpha-amino acid + L-proline</text>
        <dbReference type="Rhea" id="RHEA:76407"/>
        <dbReference type="ChEBI" id="CHEBI:15377"/>
        <dbReference type="ChEBI" id="CHEBI:59869"/>
        <dbReference type="ChEBI" id="CHEBI:60039"/>
        <dbReference type="ChEBI" id="CHEBI:195196"/>
        <dbReference type="EC" id="3.4.13.9"/>
    </reaction>
</comment>
<comment type="cofactor">
    <cofactor evidence="1">
        <name>Mn(2+)</name>
        <dbReference type="ChEBI" id="CHEBI:29035"/>
    </cofactor>
    <text evidence="1">Binds 2 manganese ions per subunit.</text>
</comment>
<comment type="similarity">
    <text evidence="1">Belongs to the peptidase M24B family. Bacterial-type prolidase subfamily.</text>
</comment>
<keyword id="KW-0224">Dipeptidase</keyword>
<keyword id="KW-0378">Hydrolase</keyword>
<keyword id="KW-0464">Manganese</keyword>
<keyword id="KW-0479">Metal-binding</keyword>
<keyword id="KW-0482">Metalloprotease</keyword>
<keyword id="KW-0645">Protease</keyword>
<keyword id="KW-1185">Reference proteome</keyword>
<dbReference type="EC" id="3.4.13.9" evidence="1"/>
<dbReference type="EMBL" id="AE017340">
    <property type="protein sequence ID" value="AAV80857.1"/>
    <property type="molecule type" value="Genomic_DNA"/>
</dbReference>
<dbReference type="RefSeq" id="WP_011233277.1">
    <property type="nucleotide sequence ID" value="NC_006512.1"/>
</dbReference>
<dbReference type="SMR" id="Q5QXH5"/>
<dbReference type="STRING" id="283942.IL0013"/>
<dbReference type="GeneID" id="41335161"/>
<dbReference type="KEGG" id="ilo:IL0013"/>
<dbReference type="eggNOG" id="COG0006">
    <property type="taxonomic scope" value="Bacteria"/>
</dbReference>
<dbReference type="HOGENOM" id="CLU_050675_0_0_6"/>
<dbReference type="OrthoDB" id="9806388at2"/>
<dbReference type="Proteomes" id="UP000001171">
    <property type="component" value="Chromosome"/>
</dbReference>
<dbReference type="GO" id="GO:0005829">
    <property type="term" value="C:cytosol"/>
    <property type="evidence" value="ECO:0007669"/>
    <property type="project" value="TreeGrafter"/>
</dbReference>
<dbReference type="GO" id="GO:0004177">
    <property type="term" value="F:aminopeptidase activity"/>
    <property type="evidence" value="ECO:0007669"/>
    <property type="project" value="TreeGrafter"/>
</dbReference>
<dbReference type="GO" id="GO:0046872">
    <property type="term" value="F:metal ion binding"/>
    <property type="evidence" value="ECO:0007669"/>
    <property type="project" value="UniProtKB-KW"/>
</dbReference>
<dbReference type="GO" id="GO:0008235">
    <property type="term" value="F:metalloexopeptidase activity"/>
    <property type="evidence" value="ECO:0007669"/>
    <property type="project" value="UniProtKB-UniRule"/>
</dbReference>
<dbReference type="GO" id="GO:0016795">
    <property type="term" value="F:phosphoric triester hydrolase activity"/>
    <property type="evidence" value="ECO:0007669"/>
    <property type="project" value="InterPro"/>
</dbReference>
<dbReference type="GO" id="GO:0102009">
    <property type="term" value="F:proline dipeptidase activity"/>
    <property type="evidence" value="ECO:0007669"/>
    <property type="project" value="UniProtKB-EC"/>
</dbReference>
<dbReference type="GO" id="GO:0006508">
    <property type="term" value="P:proteolysis"/>
    <property type="evidence" value="ECO:0007669"/>
    <property type="project" value="UniProtKB-KW"/>
</dbReference>
<dbReference type="Gene3D" id="3.90.230.10">
    <property type="entry name" value="Creatinase/methionine aminopeptidase superfamily"/>
    <property type="match status" value="1"/>
</dbReference>
<dbReference type="Gene3D" id="3.40.350.10">
    <property type="entry name" value="Creatinase/prolidase N-terminal domain"/>
    <property type="match status" value="1"/>
</dbReference>
<dbReference type="HAMAP" id="MF_01279">
    <property type="entry name" value="X_Pro_dipeptid"/>
    <property type="match status" value="1"/>
</dbReference>
<dbReference type="InterPro" id="IPR029149">
    <property type="entry name" value="Creatin/AminoP/Spt16_N"/>
</dbReference>
<dbReference type="InterPro" id="IPR036005">
    <property type="entry name" value="Creatinase/aminopeptidase-like"/>
</dbReference>
<dbReference type="InterPro" id="IPR048819">
    <property type="entry name" value="PepQ_N"/>
</dbReference>
<dbReference type="InterPro" id="IPR000994">
    <property type="entry name" value="Pept_M24"/>
</dbReference>
<dbReference type="InterPro" id="IPR001131">
    <property type="entry name" value="Peptidase_M24B_aminopep-P_CS"/>
</dbReference>
<dbReference type="InterPro" id="IPR052433">
    <property type="entry name" value="X-Pro_dipept-like"/>
</dbReference>
<dbReference type="InterPro" id="IPR022846">
    <property type="entry name" value="X_Pro_dipept"/>
</dbReference>
<dbReference type="NCBIfam" id="NF010133">
    <property type="entry name" value="PRK13607.1"/>
    <property type="match status" value="1"/>
</dbReference>
<dbReference type="PANTHER" id="PTHR43226">
    <property type="entry name" value="XAA-PRO AMINOPEPTIDASE 3"/>
    <property type="match status" value="1"/>
</dbReference>
<dbReference type="PANTHER" id="PTHR43226:SF8">
    <property type="entry name" value="XAA-PRO DIPEPTIDASE"/>
    <property type="match status" value="1"/>
</dbReference>
<dbReference type="Pfam" id="PF21216">
    <property type="entry name" value="PepQ_N"/>
    <property type="match status" value="1"/>
</dbReference>
<dbReference type="Pfam" id="PF00557">
    <property type="entry name" value="Peptidase_M24"/>
    <property type="match status" value="1"/>
</dbReference>
<dbReference type="SUPFAM" id="SSF55920">
    <property type="entry name" value="Creatinase/aminopeptidase"/>
    <property type="match status" value="1"/>
</dbReference>
<dbReference type="PROSITE" id="PS00491">
    <property type="entry name" value="PROLINE_PEPTIDASE"/>
    <property type="match status" value="1"/>
</dbReference>
<accession>Q5QXH5</accession>